<protein>
    <recommendedName>
        <fullName evidence="1">Large ribosomal subunit protein uL1</fullName>
    </recommendedName>
    <alternativeName>
        <fullName evidence="2">50S ribosomal protein L1</fullName>
    </alternativeName>
</protein>
<reference key="1">
    <citation type="journal article" date="2005" name="Science">
        <title>Genome streamlining in a cosmopolitan oceanic bacterium.</title>
        <authorList>
            <person name="Giovannoni S.J."/>
            <person name="Tripp H.J."/>
            <person name="Givan S."/>
            <person name="Podar M."/>
            <person name="Vergin K.L."/>
            <person name="Baptista D."/>
            <person name="Bibbs L."/>
            <person name="Eads J."/>
            <person name="Richardson T.H."/>
            <person name="Noordewier M."/>
            <person name="Rappe M.S."/>
            <person name="Short J.M."/>
            <person name="Carrington J.C."/>
            <person name="Mathur E.J."/>
        </authorList>
    </citation>
    <scope>NUCLEOTIDE SEQUENCE [LARGE SCALE GENOMIC DNA]</scope>
    <source>
        <strain>HTCC1062</strain>
    </source>
</reference>
<comment type="function">
    <text evidence="1">Binds directly to 23S rRNA. The L1 stalk is quite mobile in the ribosome, and is involved in E site tRNA release.</text>
</comment>
<comment type="function">
    <text evidence="1">Protein L1 is also a translational repressor protein, it controls the translation of the L11 operon by binding to its mRNA.</text>
</comment>
<comment type="subunit">
    <text evidence="1">Part of the 50S ribosomal subunit.</text>
</comment>
<comment type="similarity">
    <text evidence="1">Belongs to the universal ribosomal protein uL1 family.</text>
</comment>
<feature type="chain" id="PRO_0000307659" description="Large ribosomal subunit protein uL1">
    <location>
        <begin position="1"/>
        <end position="229"/>
    </location>
</feature>
<proteinExistence type="inferred from homology"/>
<sequence>MPSKRFKQLPEKTKDLTADVIENLLATVKKNCTTKFDESIDLSFQVNNKQKKGEVNIRTVVNLPGGTGKKVKVAVVCEDTKAKEAKDAGADIVGSDEFIDKIKAGELNFEKLICTPGMMVKLSKLGKVLGPKGLMPNPKLGSVSEDIKQAVTNAKSGQAEIRNDKDGNIGVSIGKKSFHDDQLLKNFHAILDTLEKEKGNLTLKGDLIKNTFITSSMGVSYKVKLGKAI</sequence>
<keyword id="KW-1185">Reference proteome</keyword>
<keyword id="KW-0678">Repressor</keyword>
<keyword id="KW-0687">Ribonucleoprotein</keyword>
<keyword id="KW-0689">Ribosomal protein</keyword>
<keyword id="KW-0694">RNA-binding</keyword>
<keyword id="KW-0699">rRNA-binding</keyword>
<keyword id="KW-0810">Translation regulation</keyword>
<keyword id="KW-0820">tRNA-binding</keyword>
<organism>
    <name type="scientific">Pelagibacter ubique (strain HTCC1062)</name>
    <dbReference type="NCBI Taxonomy" id="335992"/>
    <lineage>
        <taxon>Bacteria</taxon>
        <taxon>Pseudomonadati</taxon>
        <taxon>Pseudomonadota</taxon>
        <taxon>Alphaproteobacteria</taxon>
        <taxon>Candidatus Pelagibacterales</taxon>
        <taxon>Candidatus Pelagibacteraceae</taxon>
        <taxon>Candidatus Pelagibacter</taxon>
    </lineage>
</organism>
<name>RL1_PELUB</name>
<dbReference type="EMBL" id="CP000084">
    <property type="protein sequence ID" value="AAZ21929.1"/>
    <property type="molecule type" value="Genomic_DNA"/>
</dbReference>
<dbReference type="RefSeq" id="WP_011282160.1">
    <property type="nucleotide sequence ID" value="NC_007205.1"/>
</dbReference>
<dbReference type="SMR" id="Q4FLK9"/>
<dbReference type="STRING" id="335992.SAR11_1126"/>
<dbReference type="GeneID" id="66295615"/>
<dbReference type="KEGG" id="pub:SAR11_1126"/>
<dbReference type="eggNOG" id="COG0081">
    <property type="taxonomic scope" value="Bacteria"/>
</dbReference>
<dbReference type="HOGENOM" id="CLU_062853_0_0_5"/>
<dbReference type="OrthoDB" id="9803740at2"/>
<dbReference type="Proteomes" id="UP000002528">
    <property type="component" value="Chromosome"/>
</dbReference>
<dbReference type="GO" id="GO:0015934">
    <property type="term" value="C:large ribosomal subunit"/>
    <property type="evidence" value="ECO:0007669"/>
    <property type="project" value="InterPro"/>
</dbReference>
<dbReference type="GO" id="GO:0019843">
    <property type="term" value="F:rRNA binding"/>
    <property type="evidence" value="ECO:0007669"/>
    <property type="project" value="UniProtKB-UniRule"/>
</dbReference>
<dbReference type="GO" id="GO:0003735">
    <property type="term" value="F:structural constituent of ribosome"/>
    <property type="evidence" value="ECO:0007669"/>
    <property type="project" value="InterPro"/>
</dbReference>
<dbReference type="GO" id="GO:0000049">
    <property type="term" value="F:tRNA binding"/>
    <property type="evidence" value="ECO:0007669"/>
    <property type="project" value="UniProtKB-KW"/>
</dbReference>
<dbReference type="GO" id="GO:0006417">
    <property type="term" value="P:regulation of translation"/>
    <property type="evidence" value="ECO:0007669"/>
    <property type="project" value="UniProtKB-KW"/>
</dbReference>
<dbReference type="GO" id="GO:0006412">
    <property type="term" value="P:translation"/>
    <property type="evidence" value="ECO:0007669"/>
    <property type="project" value="UniProtKB-UniRule"/>
</dbReference>
<dbReference type="CDD" id="cd00403">
    <property type="entry name" value="Ribosomal_L1"/>
    <property type="match status" value="1"/>
</dbReference>
<dbReference type="FunFam" id="3.40.50.790:FF:000001">
    <property type="entry name" value="50S ribosomal protein L1"/>
    <property type="match status" value="1"/>
</dbReference>
<dbReference type="Gene3D" id="3.30.190.20">
    <property type="match status" value="1"/>
</dbReference>
<dbReference type="Gene3D" id="3.40.50.790">
    <property type="match status" value="1"/>
</dbReference>
<dbReference type="HAMAP" id="MF_01318_B">
    <property type="entry name" value="Ribosomal_uL1_B"/>
    <property type="match status" value="1"/>
</dbReference>
<dbReference type="InterPro" id="IPR005878">
    <property type="entry name" value="Ribosom_uL1_bac-type"/>
</dbReference>
<dbReference type="InterPro" id="IPR002143">
    <property type="entry name" value="Ribosomal_uL1"/>
</dbReference>
<dbReference type="InterPro" id="IPR023674">
    <property type="entry name" value="Ribosomal_uL1-like"/>
</dbReference>
<dbReference type="InterPro" id="IPR028364">
    <property type="entry name" value="Ribosomal_uL1/biogenesis"/>
</dbReference>
<dbReference type="InterPro" id="IPR016095">
    <property type="entry name" value="Ribosomal_uL1_3-a/b-sand"/>
</dbReference>
<dbReference type="InterPro" id="IPR023673">
    <property type="entry name" value="Ribosomal_uL1_CS"/>
</dbReference>
<dbReference type="NCBIfam" id="TIGR01169">
    <property type="entry name" value="rplA_bact"/>
    <property type="match status" value="1"/>
</dbReference>
<dbReference type="PANTHER" id="PTHR36427">
    <property type="entry name" value="54S RIBOSOMAL PROTEIN L1, MITOCHONDRIAL"/>
    <property type="match status" value="1"/>
</dbReference>
<dbReference type="PANTHER" id="PTHR36427:SF3">
    <property type="entry name" value="LARGE RIBOSOMAL SUBUNIT PROTEIN UL1M"/>
    <property type="match status" value="1"/>
</dbReference>
<dbReference type="Pfam" id="PF00687">
    <property type="entry name" value="Ribosomal_L1"/>
    <property type="match status" value="1"/>
</dbReference>
<dbReference type="PIRSF" id="PIRSF002155">
    <property type="entry name" value="Ribosomal_L1"/>
    <property type="match status" value="1"/>
</dbReference>
<dbReference type="SUPFAM" id="SSF56808">
    <property type="entry name" value="Ribosomal protein L1"/>
    <property type="match status" value="1"/>
</dbReference>
<dbReference type="PROSITE" id="PS01199">
    <property type="entry name" value="RIBOSOMAL_L1"/>
    <property type="match status" value="1"/>
</dbReference>
<evidence type="ECO:0000255" key="1">
    <source>
        <dbReference type="HAMAP-Rule" id="MF_01318"/>
    </source>
</evidence>
<evidence type="ECO:0000305" key="2"/>
<accession>Q4FLK9</accession>
<gene>
    <name evidence="1" type="primary">rplA</name>
    <name type="ordered locus">SAR11_1126</name>
</gene>